<protein>
    <recommendedName>
        <fullName>Putative lipoprotein LppW</fullName>
    </recommendedName>
</protein>
<dbReference type="EMBL" id="AE000516">
    <property type="protein sequence ID" value="AAK47299.1"/>
    <property type="molecule type" value="Genomic_DNA"/>
</dbReference>
<dbReference type="PIR" id="D70927">
    <property type="entry name" value="D70927"/>
</dbReference>
<dbReference type="RefSeq" id="WP_003414720.1">
    <property type="nucleotide sequence ID" value="NZ_KK341227.1"/>
</dbReference>
<dbReference type="SMR" id="P9WK66"/>
<dbReference type="KEGG" id="mtc:MT2973"/>
<dbReference type="PATRIC" id="fig|83331.31.peg.3213"/>
<dbReference type="HOGENOM" id="CLU_061997_0_0_11"/>
<dbReference type="Proteomes" id="UP000001020">
    <property type="component" value="Chromosome"/>
</dbReference>
<dbReference type="GO" id="GO:0005886">
    <property type="term" value="C:plasma membrane"/>
    <property type="evidence" value="ECO:0007669"/>
    <property type="project" value="UniProtKB-SubCell"/>
</dbReference>
<dbReference type="GO" id="GO:0008800">
    <property type="term" value="F:beta-lactamase activity"/>
    <property type="evidence" value="ECO:0007669"/>
    <property type="project" value="InterPro"/>
</dbReference>
<dbReference type="GO" id="GO:0030655">
    <property type="term" value="P:beta-lactam antibiotic catabolic process"/>
    <property type="evidence" value="ECO:0007669"/>
    <property type="project" value="InterPro"/>
</dbReference>
<dbReference type="GO" id="GO:0046677">
    <property type="term" value="P:response to antibiotic"/>
    <property type="evidence" value="ECO:0007669"/>
    <property type="project" value="InterPro"/>
</dbReference>
<dbReference type="Gene3D" id="3.40.710.10">
    <property type="entry name" value="DD-peptidase/beta-lactamase superfamily"/>
    <property type="match status" value="1"/>
</dbReference>
<dbReference type="InterPro" id="IPR012338">
    <property type="entry name" value="Beta-lactam/transpept-like"/>
</dbReference>
<dbReference type="InterPro" id="IPR000871">
    <property type="entry name" value="Beta-lactam_class-A"/>
</dbReference>
<dbReference type="PANTHER" id="PTHR35333">
    <property type="entry name" value="BETA-LACTAMASE"/>
    <property type="match status" value="1"/>
</dbReference>
<dbReference type="PANTHER" id="PTHR35333:SF3">
    <property type="entry name" value="BETA-LACTAMASE-TYPE TRANSPEPTIDASE FOLD CONTAINING PROTEIN"/>
    <property type="match status" value="1"/>
</dbReference>
<dbReference type="SUPFAM" id="SSF56601">
    <property type="entry name" value="beta-lactamase/transpeptidase-like"/>
    <property type="match status" value="1"/>
</dbReference>
<dbReference type="PROSITE" id="PS51257">
    <property type="entry name" value="PROKAR_LIPOPROTEIN"/>
    <property type="match status" value="1"/>
</dbReference>
<accession>P9WK66</accession>
<accession>L0TDW9</accession>
<accession>P65304</accession>
<accession>Q10823</accession>
<comment type="subcellular location">
    <subcellularLocation>
        <location evidence="1">Cell membrane</location>
        <topology evidence="1">Lipid-anchor</topology>
    </subcellularLocation>
</comment>
<sequence>MRARPLTLLTALAAVTLVVVAGCEARVEAEAYSAADRISSRPQARPQPQPVELLLRAITPPRAPAASPNVGFGELPTRVRQATDEAAAMGATLSVAVLDRATGQLVSNGNTQIIATASVAKLFIADDLLLAEAEGKVTLSPEDHHALDVMLQSSDDGAAERFWSQDGGNAVVTQVARRYGLRSTAPPSDGRWWNTISSAPDLIRYYDMLLDGSGGLPLDRAAVIIADLAQSTPTGIDGYPQRFGIPDGLYAEPVAVKQGWMCCIGSSWMHLSTGVIGPERRYIMVIESLQPADDATARATITQAVRTMFPNGRI</sequence>
<proteinExistence type="inferred from homology"/>
<gene>
    <name type="primary">lppW</name>
    <name type="ordered locus">MT2973</name>
</gene>
<name>LPPW_MYCTO</name>
<keyword id="KW-1003">Cell membrane</keyword>
<keyword id="KW-0449">Lipoprotein</keyword>
<keyword id="KW-0472">Membrane</keyword>
<keyword id="KW-0564">Palmitate</keyword>
<keyword id="KW-1185">Reference proteome</keyword>
<keyword id="KW-0732">Signal</keyword>
<reference key="1">
    <citation type="journal article" date="2002" name="J. Bacteriol.">
        <title>Whole-genome comparison of Mycobacterium tuberculosis clinical and laboratory strains.</title>
        <authorList>
            <person name="Fleischmann R.D."/>
            <person name="Alland D."/>
            <person name="Eisen J.A."/>
            <person name="Carpenter L."/>
            <person name="White O."/>
            <person name="Peterson J.D."/>
            <person name="DeBoy R.T."/>
            <person name="Dodson R.J."/>
            <person name="Gwinn M.L."/>
            <person name="Haft D.H."/>
            <person name="Hickey E.K."/>
            <person name="Kolonay J.F."/>
            <person name="Nelson W.C."/>
            <person name="Umayam L.A."/>
            <person name="Ermolaeva M.D."/>
            <person name="Salzberg S.L."/>
            <person name="Delcher A."/>
            <person name="Utterback T.R."/>
            <person name="Weidman J.F."/>
            <person name="Khouri H.M."/>
            <person name="Gill J."/>
            <person name="Mikula A."/>
            <person name="Bishai W."/>
            <person name="Jacobs W.R. Jr."/>
            <person name="Venter J.C."/>
            <person name="Fraser C.M."/>
        </authorList>
    </citation>
    <scope>NUCLEOTIDE SEQUENCE [LARGE SCALE GENOMIC DNA]</scope>
    <source>
        <strain>CDC 1551 / Oshkosh</strain>
    </source>
</reference>
<evidence type="ECO:0000255" key="1">
    <source>
        <dbReference type="PROSITE-ProRule" id="PRU00303"/>
    </source>
</evidence>
<organism>
    <name type="scientific">Mycobacterium tuberculosis (strain CDC 1551 / Oshkosh)</name>
    <dbReference type="NCBI Taxonomy" id="83331"/>
    <lineage>
        <taxon>Bacteria</taxon>
        <taxon>Bacillati</taxon>
        <taxon>Actinomycetota</taxon>
        <taxon>Actinomycetes</taxon>
        <taxon>Mycobacteriales</taxon>
        <taxon>Mycobacteriaceae</taxon>
        <taxon>Mycobacterium</taxon>
        <taxon>Mycobacterium tuberculosis complex</taxon>
    </lineage>
</organism>
<feature type="signal peptide" evidence="1">
    <location>
        <begin position="1"/>
        <end position="22"/>
    </location>
</feature>
<feature type="chain" id="PRO_0000427707" description="Putative lipoprotein LppW">
    <location>
        <begin position="23"/>
        <end position="314"/>
    </location>
</feature>
<feature type="lipid moiety-binding region" description="N-palmitoyl cysteine" evidence="1">
    <location>
        <position position="23"/>
    </location>
</feature>
<feature type="lipid moiety-binding region" description="S-diacylglycerol cysteine" evidence="1">
    <location>
        <position position="23"/>
    </location>
</feature>